<proteinExistence type="predicted"/>
<feature type="chain" id="PRO_0000299868" description="Uncharacterized protein YDR010C">
    <location>
        <begin position="1"/>
        <end position="110"/>
    </location>
</feature>
<gene>
    <name type="ordered locus">YDR010C</name>
    <name type="ORF">PZE110</name>
</gene>
<sequence length="110" mass="12694">MCAEPDDWERIERHPRKLKIAPRMLDFYESYIVWREGNFFLCLRSFPNGVIRGGRCFFRATSLPWKNVYGYHGHITSVCGATLTRINRAMVASDAGMGSIGLTNLFLYRV</sequence>
<keyword id="KW-1185">Reference proteome</keyword>
<organism>
    <name type="scientific">Saccharomyces cerevisiae (strain ATCC 204508 / S288c)</name>
    <name type="common">Baker's yeast</name>
    <dbReference type="NCBI Taxonomy" id="559292"/>
    <lineage>
        <taxon>Eukaryota</taxon>
        <taxon>Fungi</taxon>
        <taxon>Dikarya</taxon>
        <taxon>Ascomycota</taxon>
        <taxon>Saccharomycotina</taxon>
        <taxon>Saccharomycetes</taxon>
        <taxon>Saccharomycetales</taxon>
        <taxon>Saccharomycetaceae</taxon>
        <taxon>Saccharomyces</taxon>
    </lineage>
</organism>
<dbReference type="EMBL" id="X95966">
    <property type="protein sequence ID" value="CAA65202.1"/>
    <property type="molecule type" value="Genomic_DNA"/>
</dbReference>
<dbReference type="EMBL" id="Z48008">
    <property type="protein sequence ID" value="CAA88070.1"/>
    <property type="molecule type" value="Genomic_DNA"/>
</dbReference>
<dbReference type="EMBL" id="Z74306">
    <property type="protein sequence ID" value="CAA98830.1"/>
    <property type="molecule type" value="Genomic_DNA"/>
</dbReference>
<dbReference type="EMBL" id="BK006938">
    <property type="protein sequence ID" value="DAA80274.1"/>
    <property type="molecule type" value="Genomic_DNA"/>
</dbReference>
<dbReference type="PIR" id="S50991">
    <property type="entry name" value="S50991"/>
</dbReference>
<dbReference type="RefSeq" id="NP_001335754.1">
    <property type="nucleotide sequence ID" value="NM_001348808.1"/>
</dbReference>
<dbReference type="DIP" id="DIP-5132N"/>
<dbReference type="FunCoup" id="Q12426">
    <property type="interactions" value="32"/>
</dbReference>
<dbReference type="IntAct" id="Q12426">
    <property type="interactions" value="3"/>
</dbReference>
<dbReference type="MINT" id="Q12426"/>
<dbReference type="PaxDb" id="4932-YDR010C"/>
<dbReference type="EnsemblFungi" id="YDR010C_mRNA">
    <property type="protein sequence ID" value="YDR010C"/>
    <property type="gene ID" value="YDR010C"/>
</dbReference>
<dbReference type="GeneID" id="851573"/>
<dbReference type="AGR" id="SGD:S000002417"/>
<dbReference type="SGD" id="S000002417">
    <property type="gene designation" value="YDR010C"/>
</dbReference>
<dbReference type="HOGENOM" id="CLU_2173021_0_0_1"/>
<dbReference type="InParanoid" id="Q12426"/>
<dbReference type="PRO" id="PR:Q12426"/>
<dbReference type="Proteomes" id="UP000002311">
    <property type="component" value="Chromosome IV"/>
</dbReference>
<dbReference type="RNAct" id="Q12426">
    <property type="molecule type" value="protein"/>
</dbReference>
<accession>Q12426</accession>
<accession>A0A1S0T050</accession>
<reference key="1">
    <citation type="journal article" date="1996" name="Yeast">
        <title>Sequencing and analysis of a 35.4 kb region on the right arm of chromosome IV from Saccharomyces cerevisiae reveal 23 open reading frames.</title>
        <authorList>
            <person name="Eide L.G."/>
            <person name="Sander C."/>
            <person name="Prydz H."/>
        </authorList>
    </citation>
    <scope>NUCLEOTIDE SEQUENCE [GENOMIC DNA]</scope>
</reference>
<reference key="2">
    <citation type="journal article" date="1997" name="Nature">
        <title>The nucleotide sequence of Saccharomyces cerevisiae chromosome IV.</title>
        <authorList>
            <person name="Jacq C."/>
            <person name="Alt-Moerbe J."/>
            <person name="Andre B."/>
            <person name="Arnold W."/>
            <person name="Bahr A."/>
            <person name="Ballesta J.P.G."/>
            <person name="Bargues M."/>
            <person name="Baron L."/>
            <person name="Becker A."/>
            <person name="Biteau N."/>
            <person name="Bloecker H."/>
            <person name="Blugeon C."/>
            <person name="Boskovic J."/>
            <person name="Brandt P."/>
            <person name="Brueckner M."/>
            <person name="Buitrago M.J."/>
            <person name="Coster F."/>
            <person name="Delaveau T."/>
            <person name="del Rey F."/>
            <person name="Dujon B."/>
            <person name="Eide L.G."/>
            <person name="Garcia-Cantalejo J.M."/>
            <person name="Goffeau A."/>
            <person name="Gomez-Peris A."/>
            <person name="Granotier C."/>
            <person name="Hanemann V."/>
            <person name="Hankeln T."/>
            <person name="Hoheisel J.D."/>
            <person name="Jaeger W."/>
            <person name="Jimenez A."/>
            <person name="Jonniaux J.-L."/>
            <person name="Kraemer C."/>
            <person name="Kuester H."/>
            <person name="Laamanen P."/>
            <person name="Legros Y."/>
            <person name="Louis E.J."/>
            <person name="Moeller-Rieker S."/>
            <person name="Monnet A."/>
            <person name="Moro M."/>
            <person name="Mueller-Auer S."/>
            <person name="Nussbaumer B."/>
            <person name="Paricio N."/>
            <person name="Paulin L."/>
            <person name="Perea J."/>
            <person name="Perez-Alonso M."/>
            <person name="Perez-Ortin J.E."/>
            <person name="Pohl T.M."/>
            <person name="Prydz H."/>
            <person name="Purnelle B."/>
            <person name="Rasmussen S.W."/>
            <person name="Remacha M.A."/>
            <person name="Revuelta J.L."/>
            <person name="Rieger M."/>
            <person name="Salom D."/>
            <person name="Saluz H.P."/>
            <person name="Saiz J.E."/>
            <person name="Saren A.-M."/>
            <person name="Schaefer M."/>
            <person name="Scharfe M."/>
            <person name="Schmidt E.R."/>
            <person name="Schneider C."/>
            <person name="Scholler P."/>
            <person name="Schwarz S."/>
            <person name="Soler-Mira A."/>
            <person name="Urrestarazu L.A."/>
            <person name="Verhasselt P."/>
            <person name="Vissers S."/>
            <person name="Voet M."/>
            <person name="Volckaert G."/>
            <person name="Wagner G."/>
            <person name="Wambutt R."/>
            <person name="Wedler E."/>
            <person name="Wedler H."/>
            <person name="Woelfl S."/>
            <person name="Harris D.E."/>
            <person name="Bowman S."/>
            <person name="Brown D."/>
            <person name="Churcher C.M."/>
            <person name="Connor R."/>
            <person name="Dedman K."/>
            <person name="Gentles S."/>
            <person name="Hamlin N."/>
            <person name="Hunt S."/>
            <person name="Jones L."/>
            <person name="McDonald S."/>
            <person name="Murphy L.D."/>
            <person name="Niblett D."/>
            <person name="Odell C."/>
            <person name="Oliver K."/>
            <person name="Rajandream M.A."/>
            <person name="Richards C."/>
            <person name="Shore L."/>
            <person name="Walsh S.V."/>
            <person name="Barrell B.G."/>
            <person name="Dietrich F.S."/>
            <person name="Mulligan J.T."/>
            <person name="Allen E."/>
            <person name="Araujo R."/>
            <person name="Aviles E."/>
            <person name="Berno A."/>
            <person name="Carpenter J."/>
            <person name="Chen E."/>
            <person name="Cherry J.M."/>
            <person name="Chung E."/>
            <person name="Duncan M."/>
            <person name="Hunicke-Smith S."/>
            <person name="Hyman R.W."/>
            <person name="Komp C."/>
            <person name="Lashkari D."/>
            <person name="Lew H."/>
            <person name="Lin D."/>
            <person name="Mosedale D."/>
            <person name="Nakahara K."/>
            <person name="Namath A."/>
            <person name="Oefner P."/>
            <person name="Oh C."/>
            <person name="Petel F.X."/>
            <person name="Roberts D."/>
            <person name="Schramm S."/>
            <person name="Schroeder M."/>
            <person name="Shogren T."/>
            <person name="Shroff N."/>
            <person name="Winant A."/>
            <person name="Yelton M.A."/>
            <person name="Botstein D."/>
            <person name="Davis R.W."/>
            <person name="Johnston M."/>
            <person name="Andrews S."/>
            <person name="Brinkman R."/>
            <person name="Cooper J."/>
            <person name="Ding H."/>
            <person name="Du Z."/>
            <person name="Favello A."/>
            <person name="Fulton L."/>
            <person name="Gattung S."/>
            <person name="Greco T."/>
            <person name="Hallsworth K."/>
            <person name="Hawkins J."/>
            <person name="Hillier L.W."/>
            <person name="Jier M."/>
            <person name="Johnson D."/>
            <person name="Johnston L."/>
            <person name="Kirsten J."/>
            <person name="Kucaba T."/>
            <person name="Langston Y."/>
            <person name="Latreille P."/>
            <person name="Le T."/>
            <person name="Mardis E."/>
            <person name="Menezes S."/>
            <person name="Miller N."/>
            <person name="Nhan M."/>
            <person name="Pauley A."/>
            <person name="Peluso D."/>
            <person name="Rifkin L."/>
            <person name="Riles L."/>
            <person name="Taich A."/>
            <person name="Trevaskis E."/>
            <person name="Vignati D."/>
            <person name="Wilcox L."/>
            <person name="Wohldman P."/>
            <person name="Vaudin M."/>
            <person name="Wilson R."/>
            <person name="Waterston R."/>
            <person name="Albermann K."/>
            <person name="Hani J."/>
            <person name="Heumann K."/>
            <person name="Kleine K."/>
            <person name="Mewes H.-W."/>
            <person name="Zollner A."/>
            <person name="Zaccaria P."/>
        </authorList>
    </citation>
    <scope>NUCLEOTIDE SEQUENCE [LARGE SCALE GENOMIC DNA]</scope>
    <source>
        <strain>ATCC 204508 / S288c</strain>
    </source>
</reference>
<reference key="3">
    <citation type="journal article" date="2014" name="G3 (Bethesda)">
        <title>The reference genome sequence of Saccharomyces cerevisiae: Then and now.</title>
        <authorList>
            <person name="Engel S.R."/>
            <person name="Dietrich F.S."/>
            <person name="Fisk D.G."/>
            <person name="Binkley G."/>
            <person name="Balakrishnan R."/>
            <person name="Costanzo M.C."/>
            <person name="Dwight S.S."/>
            <person name="Hitz B.C."/>
            <person name="Karra K."/>
            <person name="Nash R.S."/>
            <person name="Weng S."/>
            <person name="Wong E.D."/>
            <person name="Lloyd P."/>
            <person name="Skrzypek M.S."/>
            <person name="Miyasato S.R."/>
            <person name="Simison M."/>
            <person name="Cherry J.M."/>
        </authorList>
    </citation>
    <scope>GENOME REANNOTATION</scope>
    <source>
        <strain>ATCC 204508 / S288c</strain>
    </source>
</reference>
<protein>
    <recommendedName>
        <fullName>Uncharacterized protein YDR010C</fullName>
    </recommendedName>
</protein>
<name>YDR10_YEAST</name>